<reference key="1">
    <citation type="journal article" date="2000" name="Proc. Natl. Acad. Sci. U.S.A.">
        <title>Archaeal adaptation to higher temperatures revealed by genomic sequence of Thermoplasma volcanium.</title>
        <authorList>
            <person name="Kawashima T."/>
            <person name="Amano N."/>
            <person name="Koike H."/>
            <person name="Makino S."/>
            <person name="Higuchi S."/>
            <person name="Kawashima-Ohya Y."/>
            <person name="Watanabe K."/>
            <person name="Yamazaki M."/>
            <person name="Kanehori K."/>
            <person name="Kawamoto T."/>
            <person name="Nunoshiba T."/>
            <person name="Yamamoto Y."/>
            <person name="Aramaki H."/>
            <person name="Makino K."/>
            <person name="Suzuki M."/>
        </authorList>
    </citation>
    <scope>NUCLEOTIDE SEQUENCE [LARGE SCALE GENOMIC DNA]</scope>
    <source>
        <strain>ATCC 51530 / DSM 4299 / JCM 9571 / NBRC 15438 / GSS1</strain>
    </source>
</reference>
<accession>Q979P8</accession>
<gene>
    <name evidence="1" type="primary">guaAA</name>
    <name type="ordered locus">TV1112</name>
    <name type="ORF">TVG1144148</name>
</gene>
<comment type="function">
    <text evidence="1">Catalyzes the synthesis of GMP from XMP.</text>
</comment>
<comment type="catalytic activity">
    <reaction evidence="1">
        <text>XMP + L-glutamine + ATP + H2O = GMP + L-glutamate + AMP + diphosphate + 2 H(+)</text>
        <dbReference type="Rhea" id="RHEA:11680"/>
        <dbReference type="ChEBI" id="CHEBI:15377"/>
        <dbReference type="ChEBI" id="CHEBI:15378"/>
        <dbReference type="ChEBI" id="CHEBI:29985"/>
        <dbReference type="ChEBI" id="CHEBI:30616"/>
        <dbReference type="ChEBI" id="CHEBI:33019"/>
        <dbReference type="ChEBI" id="CHEBI:57464"/>
        <dbReference type="ChEBI" id="CHEBI:58115"/>
        <dbReference type="ChEBI" id="CHEBI:58359"/>
        <dbReference type="ChEBI" id="CHEBI:456215"/>
        <dbReference type="EC" id="6.3.5.2"/>
    </reaction>
</comment>
<comment type="pathway">
    <text evidence="1">Purine metabolism; GMP biosynthesis; GMP from XMP (L-Gln route): step 1/1.</text>
</comment>
<comment type="subunit">
    <text evidence="1">Heterodimer composed of a glutamine amidotransferase subunit (A) and a GMP-binding subunit (B).</text>
</comment>
<sequence>MIMKIYVVDNGGQWTHREWRVLRELGVETEIVPNDIESRKLDGLDGLVLSGGAPNIDEEMDKLGSIGEYIEDHDYPVFGICVGAQFIALHYGAQVVKAKHPEFGKTLVKISEPANVLAGLPENIIAWENHNDEIKNLTSDFVLTASSETCEVQAFYHKHKPLYAVQFHPEVEHTQFGREIFKNFIAICQQHKEKLINNVNNK</sequence>
<feature type="chain" id="PRO_0000140236" description="GMP synthase [glutamine-hydrolyzing] subunit A">
    <location>
        <begin position="1"/>
        <end position="202"/>
    </location>
</feature>
<feature type="domain" description="Glutamine amidotransferase type-1" evidence="1">
    <location>
        <begin position="4"/>
        <end position="194"/>
    </location>
</feature>
<feature type="active site" description="Nucleophile" evidence="1">
    <location>
        <position position="81"/>
    </location>
</feature>
<feature type="active site" evidence="1">
    <location>
        <position position="168"/>
    </location>
</feature>
<feature type="active site" evidence="1">
    <location>
        <position position="170"/>
    </location>
</feature>
<protein>
    <recommendedName>
        <fullName evidence="1">GMP synthase [glutamine-hydrolyzing] subunit A</fullName>
        <ecNumber evidence="1">6.3.5.2</ecNumber>
    </recommendedName>
    <alternativeName>
        <fullName evidence="1">Glutamine amidotransferase</fullName>
    </alternativeName>
</protein>
<proteinExistence type="inferred from homology"/>
<name>GUAAA_THEVO</name>
<keyword id="KW-0067">ATP-binding</keyword>
<keyword id="KW-0315">Glutamine amidotransferase</keyword>
<keyword id="KW-0332">GMP biosynthesis</keyword>
<keyword id="KW-0436">Ligase</keyword>
<keyword id="KW-0547">Nucleotide-binding</keyword>
<keyword id="KW-0658">Purine biosynthesis</keyword>
<dbReference type="EC" id="6.3.5.2" evidence="1"/>
<dbReference type="EMBL" id="BA000011">
    <property type="protein sequence ID" value="BAB60254.1"/>
    <property type="molecule type" value="Genomic_DNA"/>
</dbReference>
<dbReference type="RefSeq" id="WP_010917346.1">
    <property type="nucleotide sequence ID" value="NC_002689.2"/>
</dbReference>
<dbReference type="SMR" id="Q979P8"/>
<dbReference type="STRING" id="273116.gene:9381911"/>
<dbReference type="MEROPS" id="C26.A31"/>
<dbReference type="PaxDb" id="273116-14325350"/>
<dbReference type="GeneID" id="1441228"/>
<dbReference type="KEGG" id="tvo:TVG1144148"/>
<dbReference type="eggNOG" id="arCOG00087">
    <property type="taxonomic scope" value="Archaea"/>
</dbReference>
<dbReference type="HOGENOM" id="CLU_014340_1_4_2"/>
<dbReference type="OrthoDB" id="10772at2157"/>
<dbReference type="PhylomeDB" id="Q979P8"/>
<dbReference type="UniPathway" id="UPA00189">
    <property type="reaction ID" value="UER00296"/>
</dbReference>
<dbReference type="Proteomes" id="UP000001017">
    <property type="component" value="Chromosome"/>
</dbReference>
<dbReference type="GO" id="GO:0005829">
    <property type="term" value="C:cytosol"/>
    <property type="evidence" value="ECO:0007669"/>
    <property type="project" value="TreeGrafter"/>
</dbReference>
<dbReference type="GO" id="GO:0005524">
    <property type="term" value="F:ATP binding"/>
    <property type="evidence" value="ECO:0007669"/>
    <property type="project" value="UniProtKB-KW"/>
</dbReference>
<dbReference type="GO" id="GO:0003921">
    <property type="term" value="F:GMP synthase activity"/>
    <property type="evidence" value="ECO:0007669"/>
    <property type="project" value="TreeGrafter"/>
</dbReference>
<dbReference type="CDD" id="cd01742">
    <property type="entry name" value="GATase1_GMP_Synthase"/>
    <property type="match status" value="1"/>
</dbReference>
<dbReference type="FunFam" id="3.40.50.880:FF:000047">
    <property type="entry name" value="GMP synthase [glutamine-hydrolyzing] subunit A"/>
    <property type="match status" value="1"/>
</dbReference>
<dbReference type="Gene3D" id="3.40.50.880">
    <property type="match status" value="1"/>
</dbReference>
<dbReference type="HAMAP" id="MF_01510">
    <property type="entry name" value="GMP_synthase_A"/>
    <property type="match status" value="1"/>
</dbReference>
<dbReference type="InterPro" id="IPR029062">
    <property type="entry name" value="Class_I_gatase-like"/>
</dbReference>
<dbReference type="InterPro" id="IPR017926">
    <property type="entry name" value="GATASE"/>
</dbReference>
<dbReference type="InterPro" id="IPR004739">
    <property type="entry name" value="GMP_synth_GATase"/>
</dbReference>
<dbReference type="InterPro" id="IPR023686">
    <property type="entry name" value="GMP_synthase_A"/>
</dbReference>
<dbReference type="NCBIfam" id="TIGR00888">
    <property type="entry name" value="guaA_Nterm"/>
    <property type="match status" value="1"/>
</dbReference>
<dbReference type="NCBIfam" id="NF001975">
    <property type="entry name" value="PRK00758.1"/>
    <property type="match status" value="1"/>
</dbReference>
<dbReference type="PANTHER" id="PTHR11922:SF2">
    <property type="entry name" value="GMP SYNTHASE [GLUTAMINE-HYDROLYZING]"/>
    <property type="match status" value="1"/>
</dbReference>
<dbReference type="PANTHER" id="PTHR11922">
    <property type="entry name" value="GMP SYNTHASE-RELATED"/>
    <property type="match status" value="1"/>
</dbReference>
<dbReference type="Pfam" id="PF00117">
    <property type="entry name" value="GATase"/>
    <property type="match status" value="1"/>
</dbReference>
<dbReference type="PRINTS" id="PR00097">
    <property type="entry name" value="ANTSNTHASEII"/>
</dbReference>
<dbReference type="SUPFAM" id="SSF52317">
    <property type="entry name" value="Class I glutamine amidotransferase-like"/>
    <property type="match status" value="1"/>
</dbReference>
<dbReference type="PROSITE" id="PS51273">
    <property type="entry name" value="GATASE_TYPE_1"/>
    <property type="match status" value="1"/>
</dbReference>
<organism>
    <name type="scientific">Thermoplasma volcanium (strain ATCC 51530 / DSM 4299 / JCM 9571 / NBRC 15438 / GSS1)</name>
    <dbReference type="NCBI Taxonomy" id="273116"/>
    <lineage>
        <taxon>Archaea</taxon>
        <taxon>Methanobacteriati</taxon>
        <taxon>Thermoplasmatota</taxon>
        <taxon>Thermoplasmata</taxon>
        <taxon>Thermoplasmatales</taxon>
        <taxon>Thermoplasmataceae</taxon>
        <taxon>Thermoplasma</taxon>
    </lineage>
</organism>
<evidence type="ECO:0000255" key="1">
    <source>
        <dbReference type="HAMAP-Rule" id="MF_01510"/>
    </source>
</evidence>